<proteinExistence type="inferred from homology"/>
<reference key="1">
    <citation type="journal article" date="2002" name="Nat. Biotechnol.">
        <title>Genome sequence of the dissimilatory metal ion-reducing bacterium Shewanella oneidensis.</title>
        <authorList>
            <person name="Heidelberg J.F."/>
            <person name="Paulsen I.T."/>
            <person name="Nelson K.E."/>
            <person name="Gaidos E.J."/>
            <person name="Nelson W.C."/>
            <person name="Read T.D."/>
            <person name="Eisen J.A."/>
            <person name="Seshadri R."/>
            <person name="Ward N.L."/>
            <person name="Methe B.A."/>
            <person name="Clayton R.A."/>
            <person name="Meyer T."/>
            <person name="Tsapin A."/>
            <person name="Scott J."/>
            <person name="Beanan M.J."/>
            <person name="Brinkac L.M."/>
            <person name="Daugherty S.C."/>
            <person name="DeBoy R.T."/>
            <person name="Dodson R.J."/>
            <person name="Durkin A.S."/>
            <person name="Haft D.H."/>
            <person name="Kolonay J.F."/>
            <person name="Madupu R."/>
            <person name="Peterson J.D."/>
            <person name="Umayam L.A."/>
            <person name="White O."/>
            <person name="Wolf A.M."/>
            <person name="Vamathevan J.J."/>
            <person name="Weidman J.F."/>
            <person name="Impraim M."/>
            <person name="Lee K."/>
            <person name="Berry K.J."/>
            <person name="Lee C."/>
            <person name="Mueller J."/>
            <person name="Khouri H.M."/>
            <person name="Gill J."/>
            <person name="Utterback T.R."/>
            <person name="McDonald L.A."/>
            <person name="Feldblyum T.V."/>
            <person name="Smith H.O."/>
            <person name="Venter J.C."/>
            <person name="Nealson K.H."/>
            <person name="Fraser C.M."/>
        </authorList>
    </citation>
    <scope>NUCLEOTIDE SEQUENCE [LARGE SCALE GENOMIC DNA]</scope>
    <source>
        <strain>ATCC 700550 / JCM 31522 / CIP 106686 / LMG 19005 / NCIMB 14063 / MR-1</strain>
    </source>
</reference>
<dbReference type="EC" id="3.5.4.25" evidence="1"/>
<dbReference type="EMBL" id="AE014299">
    <property type="protein sequence ID" value="AAN55847.1"/>
    <property type="molecule type" value="Genomic_DNA"/>
</dbReference>
<dbReference type="RefSeq" id="NP_718403.1">
    <property type="nucleotide sequence ID" value="NC_004347.2"/>
</dbReference>
<dbReference type="RefSeq" id="WP_011072751.1">
    <property type="nucleotide sequence ID" value="NC_004347.2"/>
</dbReference>
<dbReference type="SMR" id="Q8EDD1"/>
<dbReference type="STRING" id="211586.SO_2831"/>
<dbReference type="PaxDb" id="211586-SO_2831"/>
<dbReference type="KEGG" id="son:SO_2831"/>
<dbReference type="PATRIC" id="fig|211586.12.peg.2732"/>
<dbReference type="eggNOG" id="COG0807">
    <property type="taxonomic scope" value="Bacteria"/>
</dbReference>
<dbReference type="HOGENOM" id="CLU_020273_2_1_6"/>
<dbReference type="OrthoDB" id="9793111at2"/>
<dbReference type="PhylomeDB" id="Q8EDD1"/>
<dbReference type="BioCyc" id="SONE211586:G1GMP-2611-MONOMER"/>
<dbReference type="UniPathway" id="UPA00275">
    <property type="reaction ID" value="UER00400"/>
</dbReference>
<dbReference type="Proteomes" id="UP000008186">
    <property type="component" value="Chromosome"/>
</dbReference>
<dbReference type="GO" id="GO:0005829">
    <property type="term" value="C:cytosol"/>
    <property type="evidence" value="ECO:0000318"/>
    <property type="project" value="GO_Central"/>
</dbReference>
<dbReference type="GO" id="GO:0005525">
    <property type="term" value="F:GTP binding"/>
    <property type="evidence" value="ECO:0007669"/>
    <property type="project" value="UniProtKB-KW"/>
</dbReference>
<dbReference type="GO" id="GO:0003935">
    <property type="term" value="F:GTP cyclohydrolase II activity"/>
    <property type="evidence" value="ECO:0000318"/>
    <property type="project" value="GO_Central"/>
</dbReference>
<dbReference type="GO" id="GO:0008270">
    <property type="term" value="F:zinc ion binding"/>
    <property type="evidence" value="ECO:0007669"/>
    <property type="project" value="UniProtKB-UniRule"/>
</dbReference>
<dbReference type="GO" id="GO:0009231">
    <property type="term" value="P:riboflavin biosynthetic process"/>
    <property type="evidence" value="ECO:0000318"/>
    <property type="project" value="GO_Central"/>
</dbReference>
<dbReference type="CDD" id="cd00641">
    <property type="entry name" value="GTP_cyclohydro2"/>
    <property type="match status" value="1"/>
</dbReference>
<dbReference type="FunFam" id="3.40.50.10990:FF:000002">
    <property type="entry name" value="GTP cyclohydrolase-2"/>
    <property type="match status" value="1"/>
</dbReference>
<dbReference type="Gene3D" id="3.40.50.10990">
    <property type="entry name" value="GTP cyclohydrolase II"/>
    <property type="match status" value="1"/>
</dbReference>
<dbReference type="HAMAP" id="MF_00179">
    <property type="entry name" value="RibA"/>
    <property type="match status" value="1"/>
</dbReference>
<dbReference type="InterPro" id="IPR032677">
    <property type="entry name" value="GTP_cyclohydro_II"/>
</dbReference>
<dbReference type="InterPro" id="IPR000926">
    <property type="entry name" value="RibA"/>
</dbReference>
<dbReference type="InterPro" id="IPR036144">
    <property type="entry name" value="RibA-like_sf"/>
</dbReference>
<dbReference type="NCBIfam" id="NF001591">
    <property type="entry name" value="PRK00393.1"/>
    <property type="match status" value="1"/>
</dbReference>
<dbReference type="NCBIfam" id="TIGR00505">
    <property type="entry name" value="ribA"/>
    <property type="match status" value="1"/>
</dbReference>
<dbReference type="PANTHER" id="PTHR21327:SF18">
    <property type="entry name" value="3,4-DIHYDROXY-2-BUTANONE 4-PHOSPHATE SYNTHASE"/>
    <property type="match status" value="1"/>
</dbReference>
<dbReference type="PANTHER" id="PTHR21327">
    <property type="entry name" value="GTP CYCLOHYDROLASE II-RELATED"/>
    <property type="match status" value="1"/>
</dbReference>
<dbReference type="Pfam" id="PF00925">
    <property type="entry name" value="GTP_cyclohydro2"/>
    <property type="match status" value="1"/>
</dbReference>
<dbReference type="SUPFAM" id="SSF142695">
    <property type="entry name" value="RibA-like"/>
    <property type="match status" value="1"/>
</dbReference>
<protein>
    <recommendedName>
        <fullName evidence="1">GTP cyclohydrolase-2</fullName>
        <ecNumber evidence="1">3.5.4.25</ecNumber>
    </recommendedName>
    <alternativeName>
        <fullName evidence="1">GTP cyclohydrolase II</fullName>
    </alternativeName>
</protein>
<feature type="chain" id="PRO_0000151775" description="GTP cyclohydrolase-2">
    <location>
        <begin position="1"/>
        <end position="203"/>
    </location>
</feature>
<feature type="active site" description="Proton acceptor" evidence="1">
    <location>
        <position position="126"/>
    </location>
</feature>
<feature type="active site" description="Nucleophile" evidence="1">
    <location>
        <position position="128"/>
    </location>
</feature>
<feature type="binding site" evidence="1">
    <location>
        <begin position="49"/>
        <end position="53"/>
    </location>
    <ligand>
        <name>GTP</name>
        <dbReference type="ChEBI" id="CHEBI:37565"/>
    </ligand>
</feature>
<feature type="binding site" evidence="1">
    <location>
        <position position="54"/>
    </location>
    <ligand>
        <name>Zn(2+)</name>
        <dbReference type="ChEBI" id="CHEBI:29105"/>
        <note>catalytic</note>
    </ligand>
</feature>
<feature type="binding site" evidence="1">
    <location>
        <position position="65"/>
    </location>
    <ligand>
        <name>Zn(2+)</name>
        <dbReference type="ChEBI" id="CHEBI:29105"/>
        <note>catalytic</note>
    </ligand>
</feature>
<feature type="binding site" evidence="1">
    <location>
        <position position="67"/>
    </location>
    <ligand>
        <name>Zn(2+)</name>
        <dbReference type="ChEBI" id="CHEBI:29105"/>
        <note>catalytic</note>
    </ligand>
</feature>
<feature type="binding site" evidence="1">
    <location>
        <position position="70"/>
    </location>
    <ligand>
        <name>GTP</name>
        <dbReference type="ChEBI" id="CHEBI:37565"/>
    </ligand>
</feature>
<feature type="binding site" evidence="1">
    <location>
        <begin position="92"/>
        <end position="94"/>
    </location>
    <ligand>
        <name>GTP</name>
        <dbReference type="ChEBI" id="CHEBI:37565"/>
    </ligand>
</feature>
<feature type="binding site" evidence="1">
    <location>
        <position position="114"/>
    </location>
    <ligand>
        <name>GTP</name>
        <dbReference type="ChEBI" id="CHEBI:37565"/>
    </ligand>
</feature>
<feature type="binding site" evidence="1">
    <location>
        <position position="149"/>
    </location>
    <ligand>
        <name>GTP</name>
        <dbReference type="ChEBI" id="CHEBI:37565"/>
    </ligand>
</feature>
<feature type="binding site" evidence="1">
    <location>
        <position position="154"/>
    </location>
    <ligand>
        <name>GTP</name>
        <dbReference type="ChEBI" id="CHEBI:37565"/>
    </ligand>
</feature>
<organism>
    <name type="scientific">Shewanella oneidensis (strain ATCC 700550 / JCM 31522 / CIP 106686 / LMG 19005 / NCIMB 14063 / MR-1)</name>
    <dbReference type="NCBI Taxonomy" id="211586"/>
    <lineage>
        <taxon>Bacteria</taxon>
        <taxon>Pseudomonadati</taxon>
        <taxon>Pseudomonadota</taxon>
        <taxon>Gammaproteobacteria</taxon>
        <taxon>Alteromonadales</taxon>
        <taxon>Shewanellaceae</taxon>
        <taxon>Shewanella</taxon>
    </lineage>
</organism>
<evidence type="ECO:0000255" key="1">
    <source>
        <dbReference type="HAMAP-Rule" id="MF_00179"/>
    </source>
</evidence>
<sequence length="203" mass="22852">MSIKYVATSKLPTPWGVFAMHGFEDTETGKEHVALTFGSLSSDEPVLGRIHSECLTGDALFSLRCDCGFQLQTAMQNIAETGSGFILYLRQEGRGIGLLNKIRAYELQDKGANTVEANEQLGFPADMRKYDMIQPMLEKIGVKHVRLMTNNPRKVKAMKEIGIEVVERVPLQVGKNRYNEAYLKTKSTELGHMMSEYHFTDEE</sequence>
<keyword id="KW-0342">GTP-binding</keyword>
<keyword id="KW-0378">Hydrolase</keyword>
<keyword id="KW-0479">Metal-binding</keyword>
<keyword id="KW-0547">Nucleotide-binding</keyword>
<keyword id="KW-1185">Reference proteome</keyword>
<keyword id="KW-0686">Riboflavin biosynthesis</keyword>
<keyword id="KW-0862">Zinc</keyword>
<comment type="function">
    <text evidence="1">Catalyzes the conversion of GTP to 2,5-diamino-6-ribosylamino-4(3H)-pyrimidinone 5'-phosphate (DARP), formate and pyrophosphate.</text>
</comment>
<comment type="catalytic activity">
    <reaction evidence="1">
        <text>GTP + 4 H2O = 2,5-diamino-6-hydroxy-4-(5-phosphoribosylamino)-pyrimidine + formate + 2 phosphate + 3 H(+)</text>
        <dbReference type="Rhea" id="RHEA:23704"/>
        <dbReference type="ChEBI" id="CHEBI:15377"/>
        <dbReference type="ChEBI" id="CHEBI:15378"/>
        <dbReference type="ChEBI" id="CHEBI:15740"/>
        <dbReference type="ChEBI" id="CHEBI:37565"/>
        <dbReference type="ChEBI" id="CHEBI:43474"/>
        <dbReference type="ChEBI" id="CHEBI:58614"/>
        <dbReference type="EC" id="3.5.4.25"/>
    </reaction>
</comment>
<comment type="cofactor">
    <cofactor evidence="1">
        <name>Zn(2+)</name>
        <dbReference type="ChEBI" id="CHEBI:29105"/>
    </cofactor>
    <text evidence="1">Binds 1 zinc ion per subunit.</text>
</comment>
<comment type="pathway">
    <text evidence="1">Cofactor biosynthesis; riboflavin biosynthesis; 5-amino-6-(D-ribitylamino)uracil from GTP: step 1/4.</text>
</comment>
<comment type="similarity">
    <text evidence="1">Belongs to the GTP cyclohydrolase II family.</text>
</comment>
<name>RIBA_SHEON</name>
<gene>
    <name evidence="1" type="primary">ribA</name>
    <name type="ordered locus">SO_2831</name>
</gene>
<accession>Q8EDD1</accession>